<feature type="initiator methionine" description="Removed" evidence="12 17">
    <location>
        <position position="1"/>
    </location>
</feature>
<feature type="chain" id="PRO_0000214900" description="Cofilin-1">
    <location>
        <begin position="2"/>
        <end position="166"/>
    </location>
</feature>
<feature type="domain" description="ADF-H" evidence="5">
    <location>
        <begin position="4"/>
        <end position="153"/>
    </location>
</feature>
<feature type="short sequence motif" description="Nuclear localization signal" evidence="4">
    <location>
        <begin position="30"/>
        <end position="34"/>
    </location>
</feature>
<feature type="modified residue" description="N-acetylalanine" evidence="11 12 17">
    <location>
        <position position="2"/>
    </location>
</feature>
<feature type="modified residue" description="Phosphoserine" evidence="8 11 15 17">
    <location>
        <position position="3"/>
    </location>
</feature>
<feature type="modified residue" description="Phosphoserine" evidence="17">
    <location>
        <position position="8"/>
    </location>
</feature>
<feature type="modified residue" description="N6-acetyllysine" evidence="3">
    <location>
        <position position="13"/>
    </location>
</feature>
<feature type="modified residue" description="Phosphothreonine" evidence="3">
    <location>
        <position position="25"/>
    </location>
</feature>
<feature type="modified residue" description="Phosphoserine" evidence="3">
    <location>
        <position position="41"/>
    </location>
</feature>
<feature type="modified residue" description="Phosphothreonine" evidence="11">
    <location>
        <position position="63"/>
    </location>
</feature>
<feature type="modified residue" description="Phosphotyrosine" evidence="16">
    <location>
        <position position="68"/>
    </location>
</feature>
<feature type="modified residue" description="N6-acetyllysine" evidence="3">
    <location>
        <position position="73"/>
    </location>
</feature>
<feature type="modified residue" description="Phosphotyrosine" evidence="11">
    <location>
        <position position="82"/>
    </location>
</feature>
<feature type="modified residue" description="Phosphotyrosine" evidence="14 16">
    <location>
        <position position="140"/>
    </location>
</feature>
<feature type="modified residue" description="N6-acetyllysine" evidence="3">
    <location>
        <position position="144"/>
    </location>
</feature>
<feature type="modified residue" description="Phosphoserine" evidence="11 18">
    <location>
        <position position="156"/>
    </location>
</feature>
<feature type="cross-link" description="Glycyl lysine isopeptide (Lys-Gly) (interchain with G-Cter in SUMO2)" evidence="3">
    <location>
        <position position="132"/>
    </location>
</feature>
<feature type="mutagenesis site" description="Decreases abundance and increases disorganization of zygotic subcortical F-actin, disrupts centralization of the mitotic spindle and leads to asymmetric two-cell embryos." evidence="9">
    <original>S</original>
    <variation>A</variation>
    <location>
        <position position="3"/>
    </location>
</feature>
<feature type="mutagenesis site" description="No effect on zygotic subcortical F-actin abundance and centralization of the mitotic spindle." evidence="9">
    <original>S</original>
    <variation>E</variation>
    <location>
        <position position="3"/>
    </location>
</feature>
<name>COF1_MOUSE</name>
<gene>
    <name type="primary">Cfl1</name>
</gene>
<organism>
    <name type="scientific">Mus musculus</name>
    <name type="common">Mouse</name>
    <dbReference type="NCBI Taxonomy" id="10090"/>
    <lineage>
        <taxon>Eukaryota</taxon>
        <taxon>Metazoa</taxon>
        <taxon>Chordata</taxon>
        <taxon>Craniata</taxon>
        <taxon>Vertebrata</taxon>
        <taxon>Euteleostomi</taxon>
        <taxon>Mammalia</taxon>
        <taxon>Eutheria</taxon>
        <taxon>Euarchontoglires</taxon>
        <taxon>Glires</taxon>
        <taxon>Rodentia</taxon>
        <taxon>Myomorpha</taxon>
        <taxon>Muroidea</taxon>
        <taxon>Muridae</taxon>
        <taxon>Murinae</taxon>
        <taxon>Mus</taxon>
        <taxon>Mus</taxon>
    </lineage>
</organism>
<evidence type="ECO:0000250" key="1"/>
<evidence type="ECO:0000250" key="2">
    <source>
        <dbReference type="UniProtKB" id="P10668"/>
    </source>
</evidence>
<evidence type="ECO:0000250" key="3">
    <source>
        <dbReference type="UniProtKB" id="P23528"/>
    </source>
</evidence>
<evidence type="ECO:0000255" key="4"/>
<evidence type="ECO:0000255" key="5">
    <source>
        <dbReference type="PROSITE-ProRule" id="PRU00599"/>
    </source>
</evidence>
<evidence type="ECO:0000269" key="6">
    <source>
    </source>
</evidence>
<evidence type="ECO:0000269" key="7">
    <source>
    </source>
</evidence>
<evidence type="ECO:0000269" key="8">
    <source>
    </source>
</evidence>
<evidence type="ECO:0000269" key="9">
    <source>
    </source>
</evidence>
<evidence type="ECO:0000269" key="10">
    <source>
    </source>
</evidence>
<evidence type="ECO:0000269" key="11">
    <source>
    </source>
</evidence>
<evidence type="ECO:0000269" key="12">
    <source ref="3"/>
</evidence>
<evidence type="ECO:0000305" key="13"/>
<evidence type="ECO:0007744" key="14">
    <source>
    </source>
</evidence>
<evidence type="ECO:0007744" key="15">
    <source>
    </source>
</evidence>
<evidence type="ECO:0007744" key="16">
    <source>
    </source>
</evidence>
<evidence type="ECO:0007744" key="17">
    <source>
    </source>
</evidence>
<evidence type="ECO:0007744" key="18">
    <source>
    </source>
</evidence>
<keyword id="KW-0007">Acetylation</keyword>
<keyword id="KW-0009">Actin-binding</keyword>
<keyword id="KW-1003">Cell membrane</keyword>
<keyword id="KW-0966">Cell projection</keyword>
<keyword id="KW-0963">Cytoplasm</keyword>
<keyword id="KW-0206">Cytoskeleton</keyword>
<keyword id="KW-0903">Direct protein sequencing</keyword>
<keyword id="KW-1017">Isopeptide bond</keyword>
<keyword id="KW-0472">Membrane</keyword>
<keyword id="KW-0539">Nucleus</keyword>
<keyword id="KW-0597">Phosphoprotein</keyword>
<keyword id="KW-1185">Reference proteome</keyword>
<keyword id="KW-0832">Ubl conjugation</keyword>
<sequence>MASGVAVSDGVIKVFNDMKVRKSSTPEEVKKRKKAVLFCLSEDKKNIILEEGKEILVGDVGQTVDDPYTTFVKMLPDKDCRYALYDATYETKESKKEDLVFIFWAPENAPLKSKMIYASSKDAIKKKLTGIKHELQANCYEEVKDRCTLAEKLGGSAVISLEGKPL</sequence>
<dbReference type="EMBL" id="D00472">
    <property type="protein sequence ID" value="BAA00364.1"/>
    <property type="molecule type" value="mRNA"/>
</dbReference>
<dbReference type="EMBL" id="BC046225">
    <property type="protein sequence ID" value="AAH46225.1"/>
    <property type="molecule type" value="mRNA"/>
</dbReference>
<dbReference type="EMBL" id="BC058726">
    <property type="protein sequence ID" value="AAH58726.1"/>
    <property type="molecule type" value="mRNA"/>
</dbReference>
<dbReference type="CCDS" id="CCDS84409.1"/>
<dbReference type="PIR" id="S12584">
    <property type="entry name" value="S12584"/>
</dbReference>
<dbReference type="RefSeq" id="NP_031713.1">
    <property type="nucleotide sequence ID" value="NM_007687.5"/>
</dbReference>
<dbReference type="BMRB" id="P18760"/>
<dbReference type="SMR" id="P18760"/>
<dbReference type="BioGRID" id="198684">
    <property type="interactions" value="27"/>
</dbReference>
<dbReference type="DIP" id="DIP-38073N"/>
<dbReference type="FunCoup" id="P18760">
    <property type="interactions" value="1634"/>
</dbReference>
<dbReference type="IntAct" id="P18760">
    <property type="interactions" value="12"/>
</dbReference>
<dbReference type="MINT" id="P18760"/>
<dbReference type="STRING" id="10090.ENSMUSP00000147514"/>
<dbReference type="GlyGen" id="P18760">
    <property type="glycosylation" value="2 sites, 1 O-linked glycan (2 sites)"/>
</dbReference>
<dbReference type="iPTMnet" id="P18760"/>
<dbReference type="PhosphoSitePlus" id="P18760"/>
<dbReference type="SwissPalm" id="P18760"/>
<dbReference type="REPRODUCTION-2DPAGE" id="P18760"/>
<dbReference type="CPTAC" id="non-CPTAC-3906"/>
<dbReference type="jPOST" id="P18760"/>
<dbReference type="PaxDb" id="10090-ENSMUSP00000112259"/>
<dbReference type="PeptideAtlas" id="P18760"/>
<dbReference type="ProteomicsDB" id="283418"/>
<dbReference type="Pumba" id="P18760"/>
<dbReference type="TopDownProteomics" id="P18760"/>
<dbReference type="Antibodypedia" id="16010">
    <property type="antibodies" value="1057 antibodies from 42 providers"/>
</dbReference>
<dbReference type="DNASU" id="12631"/>
<dbReference type="Ensembl" id="ENSMUST00000209469.2">
    <property type="protein sequence ID" value="ENSMUSP00000147514.2"/>
    <property type="gene ID" value="ENSMUSG00000056201.10"/>
</dbReference>
<dbReference type="GeneID" id="12631"/>
<dbReference type="KEGG" id="mmu:12631"/>
<dbReference type="UCSC" id="uc008gdq.2">
    <property type="organism name" value="mouse"/>
</dbReference>
<dbReference type="AGR" id="MGI:101757"/>
<dbReference type="CTD" id="1072"/>
<dbReference type="MGI" id="MGI:101757">
    <property type="gene designation" value="Cfl1"/>
</dbReference>
<dbReference type="VEuPathDB" id="HostDB:ENSMUSG00000056201"/>
<dbReference type="eggNOG" id="KOG1735">
    <property type="taxonomic scope" value="Eukaryota"/>
</dbReference>
<dbReference type="GeneTree" id="ENSGT00950000183000"/>
<dbReference type="InParanoid" id="P18760"/>
<dbReference type="OMA" id="WSMIYAT"/>
<dbReference type="OrthoDB" id="31578at9989"/>
<dbReference type="PhylomeDB" id="P18760"/>
<dbReference type="BioGRID-ORCS" id="12631">
    <property type="hits" value="7 hits in 23 CRISPR screens"/>
</dbReference>
<dbReference type="CD-CODE" id="CE726F99">
    <property type="entry name" value="Postsynaptic density"/>
</dbReference>
<dbReference type="ChiTaRS" id="Cfl1">
    <property type="organism name" value="mouse"/>
</dbReference>
<dbReference type="PRO" id="PR:P18760"/>
<dbReference type="Proteomes" id="UP000000589">
    <property type="component" value="Chromosome 19"/>
</dbReference>
<dbReference type="RNAct" id="P18760">
    <property type="molecule type" value="protein"/>
</dbReference>
<dbReference type="Bgee" id="ENSMUSG00000056201">
    <property type="expression patterns" value="Expressed in midbrain and 76 other cell types or tissues"/>
</dbReference>
<dbReference type="ExpressionAtlas" id="P18760">
    <property type="expression patterns" value="baseline and differential"/>
</dbReference>
<dbReference type="GO" id="GO:0005911">
    <property type="term" value="C:cell-cell junction"/>
    <property type="evidence" value="ECO:0000314"/>
    <property type="project" value="MGI"/>
</dbReference>
<dbReference type="GO" id="GO:0090732">
    <property type="term" value="C:cofilin-actin rod"/>
    <property type="evidence" value="ECO:0007669"/>
    <property type="project" value="Ensembl"/>
</dbReference>
<dbReference type="GO" id="GO:0030864">
    <property type="term" value="C:cortical actin cytoskeleton"/>
    <property type="evidence" value="ECO:0000314"/>
    <property type="project" value="MGI"/>
</dbReference>
<dbReference type="GO" id="GO:0005737">
    <property type="term" value="C:cytoplasm"/>
    <property type="evidence" value="ECO:0000314"/>
    <property type="project" value="MGI"/>
</dbReference>
<dbReference type="GO" id="GO:0005829">
    <property type="term" value="C:cytosol"/>
    <property type="evidence" value="ECO:0000304"/>
    <property type="project" value="Reactome"/>
</dbReference>
<dbReference type="GO" id="GO:0043197">
    <property type="term" value="C:dendritic spine"/>
    <property type="evidence" value="ECO:0007669"/>
    <property type="project" value="Ensembl"/>
</dbReference>
<dbReference type="GO" id="GO:0005576">
    <property type="term" value="C:extracellular region"/>
    <property type="evidence" value="ECO:0000304"/>
    <property type="project" value="Reactome"/>
</dbReference>
<dbReference type="GO" id="GO:0030175">
    <property type="term" value="C:filopodium"/>
    <property type="evidence" value="ECO:0007669"/>
    <property type="project" value="Ensembl"/>
</dbReference>
<dbReference type="GO" id="GO:0005925">
    <property type="term" value="C:focal adhesion"/>
    <property type="evidence" value="ECO:0000266"/>
    <property type="project" value="MGI"/>
</dbReference>
<dbReference type="GO" id="GO:0098978">
    <property type="term" value="C:glutamatergic synapse"/>
    <property type="evidence" value="ECO:0000314"/>
    <property type="project" value="SynGO"/>
</dbReference>
<dbReference type="GO" id="GO:0030426">
    <property type="term" value="C:growth cone"/>
    <property type="evidence" value="ECO:0007669"/>
    <property type="project" value="UniProtKB-SubCell"/>
</dbReference>
<dbReference type="GO" id="GO:0030027">
    <property type="term" value="C:lamellipodium"/>
    <property type="evidence" value="ECO:0000314"/>
    <property type="project" value="UniProtKB"/>
</dbReference>
<dbReference type="GO" id="GO:0031258">
    <property type="term" value="C:lamellipodium membrane"/>
    <property type="evidence" value="ECO:0007669"/>
    <property type="project" value="UniProtKB-SubCell"/>
</dbReference>
<dbReference type="GO" id="GO:0031966">
    <property type="term" value="C:mitochondrial membrane"/>
    <property type="evidence" value="ECO:0007669"/>
    <property type="project" value="Ensembl"/>
</dbReference>
<dbReference type="GO" id="GO:0043025">
    <property type="term" value="C:neuronal cell body"/>
    <property type="evidence" value="ECO:0007669"/>
    <property type="project" value="Ensembl"/>
</dbReference>
<dbReference type="GO" id="GO:0016363">
    <property type="term" value="C:nuclear matrix"/>
    <property type="evidence" value="ECO:0007669"/>
    <property type="project" value="UniProtKB-SubCell"/>
</dbReference>
<dbReference type="GO" id="GO:0099092">
    <property type="term" value="C:postsynaptic density, intracellular component"/>
    <property type="evidence" value="ECO:0000314"/>
    <property type="project" value="SynGO"/>
</dbReference>
<dbReference type="GO" id="GO:0032587">
    <property type="term" value="C:ruffle membrane"/>
    <property type="evidence" value="ECO:0007669"/>
    <property type="project" value="UniProtKB-SubCell"/>
</dbReference>
<dbReference type="GO" id="GO:0097060">
    <property type="term" value="C:synaptic membrane"/>
    <property type="evidence" value="ECO:0007669"/>
    <property type="project" value="Ensembl"/>
</dbReference>
<dbReference type="GO" id="GO:0051015">
    <property type="term" value="F:actin filament binding"/>
    <property type="evidence" value="ECO:0000314"/>
    <property type="project" value="UniProtKB"/>
</dbReference>
<dbReference type="GO" id="GO:1902936">
    <property type="term" value="F:phosphatidylinositol bisphosphate binding"/>
    <property type="evidence" value="ECO:0007669"/>
    <property type="project" value="Ensembl"/>
</dbReference>
<dbReference type="GO" id="GO:0019903">
    <property type="term" value="F:protein phosphatase binding"/>
    <property type="evidence" value="ECO:0007669"/>
    <property type="project" value="Ensembl"/>
</dbReference>
<dbReference type="GO" id="GO:0005102">
    <property type="term" value="F:signaling receptor binding"/>
    <property type="evidence" value="ECO:0000353"/>
    <property type="project" value="ARUK-UCL"/>
</dbReference>
<dbReference type="GO" id="GO:0030042">
    <property type="term" value="P:actin filament depolymerization"/>
    <property type="evidence" value="ECO:0000314"/>
    <property type="project" value="UniProtKB"/>
</dbReference>
<dbReference type="GO" id="GO:0030043">
    <property type="term" value="P:actin filament fragmentation"/>
    <property type="evidence" value="ECO:0000314"/>
    <property type="project" value="UniProtKB"/>
</dbReference>
<dbReference type="GO" id="GO:0007015">
    <property type="term" value="P:actin filament organization"/>
    <property type="evidence" value="ECO:0000315"/>
    <property type="project" value="UniProtKB"/>
</dbReference>
<dbReference type="GO" id="GO:0048870">
    <property type="term" value="P:cell motility"/>
    <property type="evidence" value="ECO:0000315"/>
    <property type="project" value="MGI"/>
</dbReference>
<dbReference type="GO" id="GO:0030030">
    <property type="term" value="P:cell projection organization"/>
    <property type="evidence" value="ECO:0000266"/>
    <property type="project" value="MGI"/>
</dbReference>
<dbReference type="GO" id="GO:0071364">
    <property type="term" value="P:cellular response to epidermal growth factor stimulus"/>
    <property type="evidence" value="ECO:0007669"/>
    <property type="project" value="Ensembl"/>
</dbReference>
<dbReference type="GO" id="GO:0071362">
    <property type="term" value="P:cellular response to ether"/>
    <property type="evidence" value="ECO:0007669"/>
    <property type="project" value="Ensembl"/>
</dbReference>
<dbReference type="GO" id="GO:0070301">
    <property type="term" value="P:cellular response to hydrogen peroxide"/>
    <property type="evidence" value="ECO:0007669"/>
    <property type="project" value="Ensembl"/>
</dbReference>
<dbReference type="GO" id="GO:1990314">
    <property type="term" value="P:cellular response to insulin-like growth factor stimulus"/>
    <property type="evidence" value="ECO:0007669"/>
    <property type="project" value="Ensembl"/>
</dbReference>
<dbReference type="GO" id="GO:0071347">
    <property type="term" value="P:cellular response to interleukin-1"/>
    <property type="evidence" value="ECO:0007669"/>
    <property type="project" value="Ensembl"/>
</dbReference>
<dbReference type="GO" id="GO:0071354">
    <property type="term" value="P:cellular response to interleukin-6"/>
    <property type="evidence" value="ECO:0007669"/>
    <property type="project" value="Ensembl"/>
</dbReference>
<dbReference type="GO" id="GO:0071356">
    <property type="term" value="P:cellular response to tumor necrosis factor"/>
    <property type="evidence" value="ECO:0007669"/>
    <property type="project" value="Ensembl"/>
</dbReference>
<dbReference type="GO" id="GO:0007010">
    <property type="term" value="P:cytoskeleton organization"/>
    <property type="evidence" value="ECO:0000250"/>
    <property type="project" value="UniProtKB"/>
</dbReference>
<dbReference type="GO" id="GO:0030010">
    <property type="term" value="P:establishment of cell polarity"/>
    <property type="evidence" value="ECO:0000315"/>
    <property type="project" value="MGI"/>
</dbReference>
<dbReference type="GO" id="GO:0051293">
    <property type="term" value="P:establishment of spindle localization"/>
    <property type="evidence" value="ECO:0000315"/>
    <property type="project" value="UniProtKB"/>
</dbReference>
<dbReference type="GO" id="GO:0021766">
    <property type="term" value="P:hippocampus development"/>
    <property type="evidence" value="ECO:0007669"/>
    <property type="project" value="Ensembl"/>
</dbReference>
<dbReference type="GO" id="GO:0000281">
    <property type="term" value="P:mitotic cytokinesis"/>
    <property type="evidence" value="ECO:0000315"/>
    <property type="project" value="MGI"/>
</dbReference>
<dbReference type="GO" id="GO:0098885">
    <property type="term" value="P:modification of postsynaptic actin cytoskeleton"/>
    <property type="evidence" value="ECO:0007669"/>
    <property type="project" value="Ensembl"/>
</dbReference>
<dbReference type="GO" id="GO:0032232">
    <property type="term" value="P:negative regulation of actin filament bundle assembly"/>
    <property type="evidence" value="ECO:0007669"/>
    <property type="project" value="Ensembl"/>
</dbReference>
<dbReference type="GO" id="GO:0030835">
    <property type="term" value="P:negative regulation of actin filament depolymerization"/>
    <property type="evidence" value="ECO:0007669"/>
    <property type="project" value="Ensembl"/>
</dbReference>
<dbReference type="GO" id="GO:0007162">
    <property type="term" value="P:negative regulation of cell adhesion"/>
    <property type="evidence" value="ECO:0007669"/>
    <property type="project" value="Ensembl"/>
</dbReference>
<dbReference type="GO" id="GO:2000146">
    <property type="term" value="P:negative regulation of cell motility"/>
    <property type="evidence" value="ECO:0007669"/>
    <property type="project" value="Ensembl"/>
</dbReference>
<dbReference type="GO" id="GO:0045792">
    <property type="term" value="P:negative regulation of cell size"/>
    <property type="evidence" value="ECO:0000266"/>
    <property type="project" value="MGI"/>
</dbReference>
<dbReference type="GO" id="GO:1902951">
    <property type="term" value="P:negative regulation of dendritic spine maintenance"/>
    <property type="evidence" value="ECO:0007669"/>
    <property type="project" value="Ensembl"/>
</dbReference>
<dbReference type="GO" id="GO:0010593">
    <property type="term" value="P:negative regulation of lamellipodium assembly"/>
    <property type="evidence" value="ECO:0007669"/>
    <property type="project" value="Ensembl"/>
</dbReference>
<dbReference type="GO" id="GO:1905875">
    <property type="term" value="P:negative regulation of postsynaptic density organization"/>
    <property type="evidence" value="ECO:0007669"/>
    <property type="project" value="Ensembl"/>
</dbReference>
<dbReference type="GO" id="GO:0051511">
    <property type="term" value="P:negative regulation of unidimensional cell growth"/>
    <property type="evidence" value="ECO:0007669"/>
    <property type="project" value="Ensembl"/>
</dbReference>
<dbReference type="GO" id="GO:0001755">
    <property type="term" value="P:neural crest cell migration"/>
    <property type="evidence" value="ECO:0000315"/>
    <property type="project" value="MGI"/>
</dbReference>
<dbReference type="GO" id="GO:0001842">
    <property type="term" value="P:neural fold formation"/>
    <property type="evidence" value="ECO:0000315"/>
    <property type="project" value="MGI"/>
</dbReference>
<dbReference type="GO" id="GO:0044794">
    <property type="term" value="P:positive regulation by host of viral process"/>
    <property type="evidence" value="ECO:0007669"/>
    <property type="project" value="Ensembl"/>
</dbReference>
<dbReference type="GO" id="GO:0030836">
    <property type="term" value="P:positive regulation of actin filament depolymerization"/>
    <property type="evidence" value="ECO:0000314"/>
    <property type="project" value="CACAO"/>
</dbReference>
<dbReference type="GO" id="GO:2000814">
    <property type="term" value="P:positive regulation of barbed-end actin filament capping"/>
    <property type="evidence" value="ECO:0007669"/>
    <property type="project" value="Ensembl"/>
</dbReference>
<dbReference type="GO" id="GO:0030307">
    <property type="term" value="P:positive regulation of cell growth"/>
    <property type="evidence" value="ECO:0007669"/>
    <property type="project" value="Ensembl"/>
</dbReference>
<dbReference type="GO" id="GO:2000147">
    <property type="term" value="P:positive regulation of cell motility"/>
    <property type="evidence" value="ECO:0007669"/>
    <property type="project" value="Ensembl"/>
</dbReference>
<dbReference type="GO" id="GO:0060999">
    <property type="term" value="P:positive regulation of dendritic spine development"/>
    <property type="evidence" value="ECO:0007669"/>
    <property type="project" value="Ensembl"/>
</dbReference>
<dbReference type="GO" id="GO:0040019">
    <property type="term" value="P:positive regulation of embryonic development"/>
    <property type="evidence" value="ECO:0000315"/>
    <property type="project" value="UniProtKB"/>
</dbReference>
<dbReference type="GO" id="GO:2000784">
    <property type="term" value="P:positive regulation of establishment of cell polarity regulating cell shape"/>
    <property type="evidence" value="ECO:0007669"/>
    <property type="project" value="Ensembl"/>
</dbReference>
<dbReference type="GO" id="GO:0051894">
    <property type="term" value="P:positive regulation of focal adhesion assembly"/>
    <property type="evidence" value="ECO:0007669"/>
    <property type="project" value="Ensembl"/>
</dbReference>
<dbReference type="GO" id="GO:0010592">
    <property type="term" value="P:positive regulation of lamellipodium assembly"/>
    <property type="evidence" value="ECO:0007669"/>
    <property type="project" value="Ensembl"/>
</dbReference>
<dbReference type="GO" id="GO:1905873">
    <property type="term" value="P:positive regulation of protein localization to cell leading edge"/>
    <property type="evidence" value="ECO:0007669"/>
    <property type="project" value="Ensembl"/>
</dbReference>
<dbReference type="GO" id="GO:0045862">
    <property type="term" value="P:positive regulation of proteolysis"/>
    <property type="evidence" value="ECO:0007669"/>
    <property type="project" value="Ensembl"/>
</dbReference>
<dbReference type="GO" id="GO:0031915">
    <property type="term" value="P:positive regulation of synaptic plasticity"/>
    <property type="evidence" value="ECO:0007669"/>
    <property type="project" value="Ensembl"/>
</dbReference>
<dbReference type="GO" id="GO:0006606">
    <property type="term" value="P:protein import into nucleus"/>
    <property type="evidence" value="ECO:0007669"/>
    <property type="project" value="Ensembl"/>
</dbReference>
<dbReference type="GO" id="GO:0022604">
    <property type="term" value="P:regulation of cell morphogenesis"/>
    <property type="evidence" value="ECO:0000250"/>
    <property type="project" value="UniProtKB"/>
</dbReference>
<dbReference type="GO" id="GO:0061001">
    <property type="term" value="P:regulation of dendritic spine morphogenesis"/>
    <property type="evidence" value="ECO:0000250"/>
    <property type="project" value="ParkinsonsUK-UCL"/>
</dbReference>
<dbReference type="GO" id="GO:0014823">
    <property type="term" value="P:response to activity"/>
    <property type="evidence" value="ECO:0007669"/>
    <property type="project" value="Ensembl"/>
</dbReference>
<dbReference type="GO" id="GO:0043200">
    <property type="term" value="P:response to amino acid"/>
    <property type="evidence" value="ECO:0000314"/>
    <property type="project" value="MGI"/>
</dbReference>
<dbReference type="GO" id="GO:0009615">
    <property type="term" value="P:response to virus"/>
    <property type="evidence" value="ECO:0007669"/>
    <property type="project" value="Ensembl"/>
</dbReference>
<dbReference type="CDD" id="cd11286">
    <property type="entry name" value="ADF_cofilin_like"/>
    <property type="match status" value="1"/>
</dbReference>
<dbReference type="FunFam" id="3.40.20.10:FF:000010">
    <property type="entry name" value="Putative destrin"/>
    <property type="match status" value="1"/>
</dbReference>
<dbReference type="Gene3D" id="3.40.20.10">
    <property type="entry name" value="Severin"/>
    <property type="match status" value="1"/>
</dbReference>
<dbReference type="InterPro" id="IPR002108">
    <property type="entry name" value="ADF-H"/>
</dbReference>
<dbReference type="InterPro" id="IPR029006">
    <property type="entry name" value="ADF-H/Gelsolin-like_dom_sf"/>
</dbReference>
<dbReference type="InterPro" id="IPR017904">
    <property type="entry name" value="ADF/Cofilin"/>
</dbReference>
<dbReference type="PANTHER" id="PTHR11913">
    <property type="entry name" value="COFILIN-RELATED"/>
    <property type="match status" value="1"/>
</dbReference>
<dbReference type="Pfam" id="PF00241">
    <property type="entry name" value="Cofilin_ADF"/>
    <property type="match status" value="1"/>
</dbReference>
<dbReference type="PRINTS" id="PR00006">
    <property type="entry name" value="COFILIN"/>
</dbReference>
<dbReference type="SMART" id="SM00102">
    <property type="entry name" value="ADF"/>
    <property type="match status" value="1"/>
</dbReference>
<dbReference type="SUPFAM" id="SSF55753">
    <property type="entry name" value="Actin depolymerizing proteins"/>
    <property type="match status" value="1"/>
</dbReference>
<dbReference type="PROSITE" id="PS51263">
    <property type="entry name" value="ADF_H"/>
    <property type="match status" value="1"/>
</dbReference>
<comment type="function">
    <text evidence="3 6 7 9">Binds to F-actin and exhibits pH-sensitive F-actin depolymerizing activity (PubMed:11809832). In conjunction with the subcortical maternal complex (SCMC), plays an essential role for zygotes to progress beyond the first embryonic cell divisions via regulation of actin dynamics (PubMed:25208553). Required for the centralization of the mitotic spindle and symmetric division of zygotes (PubMed:25208553). Plays a role in the regulation of cell morphology and cytoskeletal organization in epithelial cells (By similarity). Required for the up-regulation of atypical chemokine receptor ACKR2 from endosomal compartment to cell membrane, increasing its efficiency in chemokine uptake and degradation (By similarity). Required for neural tube morphogenesis and neural crest cell migration (PubMed:15649475).</text>
</comment>
<comment type="subunit">
    <text evidence="2 6 9 10">Can bind G- and F-actin in a 1:1 ratio of cofilin to actin (PubMed:11809832). It is a major component of intranuclear and cytoplasmic actin rods (By similarity). Interacts with the subcortical maternal complex (SCMC) via interaction with TLE6 and NLRP5 (PubMed:25208553). Interacts with C9orf72 (PubMed:27723745).</text>
</comment>
<comment type="subcellular location">
    <subcellularLocation>
        <location evidence="2">Nucleus matrix</location>
    </subcellularLocation>
    <subcellularLocation>
        <location evidence="2">Cytoplasm</location>
        <location evidence="2">Cytoskeleton</location>
    </subcellularLocation>
    <subcellularLocation>
        <location evidence="1">Cell projection</location>
        <location evidence="1">Ruffle membrane</location>
        <topology evidence="2">Peripheral membrane protein</topology>
        <orientation evidence="2">Cytoplasmic side</orientation>
    </subcellularLocation>
    <subcellularLocation>
        <location evidence="2">Cell projection</location>
        <location evidence="2">Lamellipodium membrane</location>
        <topology evidence="2">Peripheral membrane protein</topology>
        <orientation evidence="2">Cytoplasmic side</orientation>
    </subcellularLocation>
    <subcellularLocation>
        <location evidence="8">Cell projection</location>
        <location evidence="8">Lamellipodium</location>
    </subcellularLocation>
    <subcellularLocation>
        <location evidence="10">Cell projection</location>
        <location evidence="10">Growth cone</location>
    </subcellularLocation>
    <subcellularLocation>
        <location evidence="10">Cell projection</location>
        <location evidence="10">Axon</location>
    </subcellularLocation>
    <text evidence="3">Colocalizes with the actin cytoskeleton in membrane ruffles and lamellipodia. Detected at the cleavage furrow and contractile ring during cytokinesis. Almost completely in nucleus in cells exposed to heat shock or 10% dimethyl sulfoxide.</text>
</comment>
<comment type="tissue specificity">
    <text evidence="6">Widely distributed in various tissues. Not found in skeletal muscle.</text>
</comment>
<comment type="developmental stage">
    <text evidence="7">In 10.5 dpc embryo somites is expressed in a ventral cell layer (myotome).</text>
</comment>
<comment type="PTM">
    <text evidence="1 8">Inactivated by phosphorylation on Ser-3. Phosphorylated on Ser-3 in resting cells (PubMed:25107909). Dephosphorylated by PDXP/chronophin; this restores its activity in promoting actin filament depolymerization. The phosphorylation of Ser-24 may prevent recognition of the nuclear localization signal (By similarity). Phosphorylated via a ARRB1-RAC1-LIMK1-PAK1 cascade upon active ligand stimulation of atypical chemokine receptor ACKR2 (By similarity).</text>
</comment>
<comment type="similarity">
    <text evidence="13">Belongs to the actin-binding proteins ADF family.</text>
</comment>
<protein>
    <recommendedName>
        <fullName>Cofilin-1</fullName>
    </recommendedName>
    <alternativeName>
        <fullName>Cofilin, non-muscle isoform</fullName>
    </alternativeName>
</protein>
<reference key="1">
    <citation type="journal article" date="1990" name="Nucleic Acids Res.">
        <title>Nucleotide sequence of mouse cofilin cDNA.</title>
        <authorList>
            <person name="Moriyama K."/>
            <person name="Matsumoto S."/>
            <person name="Nishida E."/>
            <person name="Sakai H."/>
            <person name="Yahara I."/>
        </authorList>
    </citation>
    <scope>NUCLEOTIDE SEQUENCE [MRNA]</scope>
    <source>
        <strain>Swiss Webster</strain>
    </source>
</reference>
<reference key="2">
    <citation type="journal article" date="2004" name="Genome Res.">
        <title>The status, quality, and expansion of the NIH full-length cDNA project: the Mammalian Gene Collection (MGC).</title>
        <authorList>
            <consortium name="The MGC Project Team"/>
        </authorList>
    </citation>
    <scope>NUCLEOTIDE SEQUENCE [LARGE SCALE MRNA]</scope>
    <source>
        <strain>C57BL/6J</strain>
        <tissue>Brain</tissue>
    </source>
</reference>
<reference key="3">
    <citation type="submission" date="2005-07" db="UniProtKB">
        <authorList>
            <person name="Bienvenut W.V."/>
        </authorList>
    </citation>
    <scope>PROTEIN SEQUENCE OF 2-13 AND 153-166</scope>
    <scope>CLEAVAGE OF INITIATOR METHIONINE</scope>
    <scope>ACETYLATION AT ALA-2</scope>
    <scope>IDENTIFICATION BY MASS SPECTROMETRY</scope>
    <source>
        <strain>C57BL/6J</strain>
        <tissue>Liver</tissue>
    </source>
</reference>
<reference key="4">
    <citation type="submission" date="2007-03" db="UniProtKB">
        <authorList>
            <person name="Lubec G."/>
            <person name="Klug S."/>
        </authorList>
    </citation>
    <scope>PROTEIN SEQUENCE OF 54-73 AND 96-112</scope>
    <scope>IDENTIFICATION BY MASS SPECTROMETRY</scope>
    <source>
        <tissue>Hippocampus</tissue>
    </source>
</reference>
<reference key="5">
    <citation type="journal article" date="2002" name="Mol. Biol. Cell">
        <title>The three mouse actin-depolymerizing factor/cofilins evolved to fulfill cell-type-specific requirements for actin dynamics.</title>
        <authorList>
            <person name="Vartiainen M.K."/>
            <person name="Mustonen T."/>
            <person name="Mattila P.K."/>
            <person name="Ojala P.J."/>
            <person name="Thesleff I."/>
            <person name="Partanen J."/>
            <person name="Lappalainen P."/>
        </authorList>
    </citation>
    <scope>FUNCTION</scope>
    <scope>ACTIN BINDING</scope>
    <scope>TISSUE SPECIFICITY</scope>
</reference>
<reference key="6">
    <citation type="journal article" date="2005" name="Dev. Biol.">
        <title>The actin depolymerizing factor n-cofilin is essential for neural tube morphogenesis and neural crest cell migration.</title>
        <authorList>
            <person name="Gurniak C.B."/>
            <person name="Perlas E."/>
            <person name="Witke W."/>
        </authorList>
    </citation>
    <scope>FUNCTION</scope>
    <scope>DEVELOPMENTAL STAGE</scope>
</reference>
<reference key="7">
    <citation type="journal article" date="2005" name="Nat. Biotechnol.">
        <title>Immunoaffinity profiling of tyrosine phosphorylation in cancer cells.</title>
        <authorList>
            <person name="Rush J."/>
            <person name="Moritz A."/>
            <person name="Lee K.A."/>
            <person name="Guo A."/>
            <person name="Goss V.L."/>
            <person name="Spek E.J."/>
            <person name="Zhang H."/>
            <person name="Zha X.-M."/>
            <person name="Polakiewicz R.D."/>
            <person name="Comb M.J."/>
        </authorList>
    </citation>
    <scope>PHOSPHORYLATION [LARGE SCALE ANALYSIS] AT TYR-140</scope>
    <scope>IDENTIFICATION BY MASS SPECTROMETRY [LARGE SCALE ANALYSIS]</scope>
</reference>
<reference key="8">
    <citation type="journal article" date="2006" name="Mol. Cell. Proteomics">
        <title>Comprehensive identification of phosphorylation sites in postsynaptic density preparations.</title>
        <authorList>
            <person name="Trinidad J.C."/>
            <person name="Specht C.G."/>
            <person name="Thalhammer A."/>
            <person name="Schoepfer R."/>
            <person name="Burlingame A.L."/>
        </authorList>
    </citation>
    <scope>PHOSPHORYLATION [LARGE SCALE ANALYSIS] AT SER-3</scope>
    <scope>IDENTIFICATION BY MASS SPECTROMETRY [LARGE SCALE ANALYSIS]</scope>
    <source>
        <tissue>Brain</tissue>
    </source>
</reference>
<reference key="9">
    <citation type="journal article" date="2007" name="J. Immunol.">
        <title>Quantitative time-resolved phosphoproteomic analysis of mast cell signaling.</title>
        <authorList>
            <person name="Cao L."/>
            <person name="Yu K."/>
            <person name="Banh C."/>
            <person name="Nguyen V."/>
            <person name="Ritz A."/>
            <person name="Raphael B.J."/>
            <person name="Kawakami Y."/>
            <person name="Kawakami T."/>
            <person name="Salomon A.R."/>
        </authorList>
    </citation>
    <scope>PHOSPHORYLATION [LARGE SCALE ANALYSIS] AT TYR-68 AND TYR-140</scope>
    <scope>IDENTIFICATION BY MASS SPECTROMETRY [LARGE SCALE ANALYSIS]</scope>
    <source>
        <tissue>Mast cell</tissue>
    </source>
</reference>
<reference key="10">
    <citation type="journal article" date="2009" name="Mol. Cell. Proteomics">
        <title>Large scale localization of protein phosphorylation by use of electron capture dissociation mass spectrometry.</title>
        <authorList>
            <person name="Sweet S.M."/>
            <person name="Bailey C.M."/>
            <person name="Cunningham D.L."/>
            <person name="Heath J.K."/>
            <person name="Cooper H.J."/>
        </authorList>
    </citation>
    <scope>ACETYLATION [LARGE SCALE ANALYSIS] AT ALA-2</scope>
    <scope>PHOSPHORYLATION [LARGE SCALE ANALYSIS] AT SER-3 AND SER-8</scope>
    <scope>CLEAVAGE OF INITIATOR METHIONINE [LARGE SCALE ANALYSIS]</scope>
    <scope>IDENTIFICATION BY MASS SPECTROMETRY [LARGE SCALE ANALYSIS]</scope>
    <source>
        <tissue>Embryonic fibroblast</tissue>
    </source>
</reference>
<reference key="11">
    <citation type="journal article" date="2010" name="Cell">
        <title>A tissue-specific atlas of mouse protein phosphorylation and expression.</title>
        <authorList>
            <person name="Huttlin E.L."/>
            <person name="Jedrychowski M.P."/>
            <person name="Elias J.E."/>
            <person name="Goswami T."/>
            <person name="Rad R."/>
            <person name="Beausoleil S.A."/>
            <person name="Villen J."/>
            <person name="Haas W."/>
            <person name="Sowa M.E."/>
            <person name="Gygi S.P."/>
        </authorList>
    </citation>
    <scope>PHOSPHORYLATION [LARGE SCALE ANALYSIS] AT SER-156</scope>
    <scope>IDENTIFICATION BY MASS SPECTROMETRY [LARGE SCALE ANALYSIS]</scope>
    <source>
        <tissue>Brain</tissue>
        <tissue>Brown adipose tissue</tissue>
        <tissue>Heart</tissue>
        <tissue>Kidney</tissue>
        <tissue>Liver</tissue>
        <tissue>Lung</tissue>
        <tissue>Pancreas</tissue>
        <tissue>Spleen</tissue>
        <tissue>Testis</tissue>
    </source>
</reference>
<reference key="12">
    <citation type="journal article" date="2014" name="J. Biol. Chem.">
        <title>Adaptor protein LRAP25 mediates myotonic dystrophy kinase-related Cdc42-binding kinase (MRCK) regulation of LIMK1 protein in lamellipodial F-actin dynamics.</title>
        <authorList>
            <person name="Lee I.C."/>
            <person name="Leung T."/>
            <person name="Tan I."/>
        </authorList>
    </citation>
    <scope>PHOSPHORYLATION AT SER-3</scope>
    <scope>SUBCELLULAR LOCATION</scope>
    <source>
        <tissue>Brain</tissue>
    </source>
</reference>
<reference key="13">
    <citation type="journal article" date="2014" name="Nat. Commun.">
        <title>The subcortical maternal complex controls symmetric division of mouse zygotes by regulating F-actin dynamics.</title>
        <authorList>
            <person name="Yu X.J."/>
            <person name="Yi Z."/>
            <person name="Gao Z."/>
            <person name="Qin D."/>
            <person name="Zhai Y."/>
            <person name="Chen X."/>
            <person name="Ou-Yang Y."/>
            <person name="Wang Z.B."/>
            <person name="Zheng P."/>
            <person name="Zhu M.S."/>
            <person name="Wang H."/>
            <person name="Sun Q.Y."/>
            <person name="Dean J."/>
            <person name="Li L."/>
        </authorList>
    </citation>
    <scope>FUNCTION</scope>
    <scope>INTERACTION WITH TLE6 AND NLRP5</scope>
    <scope>MUTAGENESIS OF SER-3</scope>
</reference>
<reference key="14">
    <citation type="journal article" date="2016" name="Nat. Neurosci.">
        <title>C9ORF72 interaction with cofilin modulates actin dynamics in motor neurons.</title>
        <authorList>
            <person name="Sivadasan R."/>
            <person name="Hornburg D."/>
            <person name="Drepper C."/>
            <person name="Frank N."/>
            <person name="Jablonka S."/>
            <person name="Hansel A."/>
            <person name="Lojewski X."/>
            <person name="Sterneckert J."/>
            <person name="Hermann A."/>
            <person name="Shaw P.J."/>
            <person name="Ince P.G."/>
            <person name="Mann M."/>
            <person name="Meissner F."/>
            <person name="Sendtner M."/>
        </authorList>
    </citation>
    <scope>INTERACTION WITH C9ORF72</scope>
    <scope>SUBCELLULAR LOCATION</scope>
</reference>
<reference key="15">
    <citation type="journal article" date="2018" name="PLoS ONE">
        <title>A quantitative proteomic analysis of cofilin phosphorylation in myeloid cells and its modulation using the LIM kinase inhibitor Pyr1.</title>
        <authorList>
            <person name="Prudent R."/>
            <person name="Demoncheaux N."/>
            <person name="Diemer H."/>
            <person name="Collin-Faure V."/>
            <person name="Kapur R."/>
            <person name="Paublant F."/>
            <person name="Lafanechere L."/>
            <person name="Cianferani S."/>
            <person name="Rabilloud T."/>
        </authorList>
    </citation>
    <scope>PHOSPHORYLATION AT SER-3; THR-63; TYR-82 AND SER-156</scope>
    <scope>ACETYLATION AT ALA-2</scope>
    <scope>IDENTIFICATION BY MASS SPECTROMETRY</scope>
</reference>
<proteinExistence type="evidence at protein level"/>
<accession>P18760</accession>